<accession>P58193</accession>
<feature type="chain" id="PRO_0000130590" description="Protein translation factor SUI1 homolog">
    <location>
        <begin position="1"/>
        <end position="99"/>
    </location>
</feature>
<feature type="strand" evidence="2">
    <location>
        <begin position="24"/>
        <end position="30"/>
    </location>
</feature>
<feature type="helix" evidence="2">
    <location>
        <begin position="32"/>
        <end position="34"/>
    </location>
</feature>
<feature type="strand" evidence="2">
    <location>
        <begin position="36"/>
        <end position="41"/>
    </location>
</feature>
<feature type="turn" evidence="2">
    <location>
        <begin position="45"/>
        <end position="47"/>
    </location>
</feature>
<feature type="helix" evidence="2">
    <location>
        <begin position="50"/>
        <end position="61"/>
    </location>
</feature>
<feature type="strand" evidence="2">
    <location>
        <begin position="65"/>
        <end position="68"/>
    </location>
</feature>
<feature type="strand" evidence="2">
    <location>
        <begin position="71"/>
        <end position="76"/>
    </location>
</feature>
<feature type="turn" evidence="2">
    <location>
        <begin position="79"/>
        <end position="81"/>
    </location>
</feature>
<feature type="helix" evidence="2">
    <location>
        <begin position="82"/>
        <end position="88"/>
    </location>
</feature>
<feature type="helix" evidence="2">
    <location>
        <begin position="93"/>
        <end position="95"/>
    </location>
</feature>
<feature type="strand" evidence="2">
    <location>
        <begin position="96"/>
        <end position="98"/>
    </location>
</feature>
<reference key="1">
    <citation type="journal article" date="1998" name="DNA Res.">
        <title>Complete sequence and gene organization of the genome of a hyper-thermophilic archaebacterium, Pyrococcus horikoshii OT3.</title>
        <authorList>
            <person name="Kawarabayasi Y."/>
            <person name="Sawada M."/>
            <person name="Horikawa H."/>
            <person name="Haikawa Y."/>
            <person name="Hino Y."/>
            <person name="Yamamoto S."/>
            <person name="Sekine M."/>
            <person name="Baba S."/>
            <person name="Kosugi H."/>
            <person name="Hosoyama A."/>
            <person name="Nagai Y."/>
            <person name="Sakai M."/>
            <person name="Ogura K."/>
            <person name="Otsuka R."/>
            <person name="Nakazawa H."/>
            <person name="Takamiya M."/>
            <person name="Ohfuku Y."/>
            <person name="Funahashi T."/>
            <person name="Tanaka T."/>
            <person name="Kudoh Y."/>
            <person name="Yamazaki J."/>
            <person name="Kushida N."/>
            <person name="Oguchi A."/>
            <person name="Aoki K."/>
            <person name="Yoshizawa T."/>
            <person name="Nakamura Y."/>
            <person name="Robb F.T."/>
            <person name="Horikoshi K."/>
            <person name="Masuchi Y."/>
            <person name="Shizuya H."/>
            <person name="Kikuchi H."/>
        </authorList>
    </citation>
    <scope>NUCLEOTIDE SEQUENCE [LARGE SCALE GENOMIC DNA]</scope>
    <source>
        <strain>ATCC 700860 / DSM 12428 / JCM 9974 / NBRC 100139 / OT-3</strain>
    </source>
</reference>
<reference key="2">
    <citation type="unpublished observations" date="2001-06">
        <authorList>
            <person name="Medigue C."/>
            <person name="Bocs S."/>
        </authorList>
    </citation>
    <scope>IDENTIFICATION</scope>
</reference>
<protein>
    <recommendedName>
        <fullName evidence="1">Protein translation factor SUI1 homolog</fullName>
    </recommendedName>
</protein>
<name>SUI1_PYRHO</name>
<dbReference type="EMBL" id="BA000001">
    <property type="status" value="NOT_ANNOTATED_CDS"/>
    <property type="molecule type" value="Genomic_DNA"/>
</dbReference>
<dbReference type="RefSeq" id="WP_010885833.1">
    <property type="nucleotide sequence ID" value="NC_000961.1"/>
</dbReference>
<dbReference type="PDB" id="5ZCY">
    <property type="method" value="X-ray"/>
    <property type="resolution" value="1.50 A"/>
    <property type="chains" value="A=1-99"/>
</dbReference>
<dbReference type="PDBsum" id="5ZCY"/>
<dbReference type="SMR" id="P58193"/>
<dbReference type="GeneID" id="1442615"/>
<dbReference type="OrthoDB" id="11182at2157"/>
<dbReference type="Proteomes" id="UP000000752">
    <property type="component" value="Chromosome"/>
</dbReference>
<dbReference type="GO" id="GO:0003729">
    <property type="term" value="F:mRNA binding"/>
    <property type="evidence" value="ECO:0007669"/>
    <property type="project" value="TreeGrafter"/>
</dbReference>
<dbReference type="GO" id="GO:0003743">
    <property type="term" value="F:translation initiation factor activity"/>
    <property type="evidence" value="ECO:0007669"/>
    <property type="project" value="InterPro"/>
</dbReference>
<dbReference type="GO" id="GO:0001731">
    <property type="term" value="P:formation of translation preinitiation complex"/>
    <property type="evidence" value="ECO:0007669"/>
    <property type="project" value="TreeGrafter"/>
</dbReference>
<dbReference type="GO" id="GO:0006417">
    <property type="term" value="P:regulation of translation"/>
    <property type="evidence" value="ECO:0007669"/>
    <property type="project" value="UniProtKB-UniRule"/>
</dbReference>
<dbReference type="GO" id="GO:0002188">
    <property type="term" value="P:translation reinitiation"/>
    <property type="evidence" value="ECO:0007669"/>
    <property type="project" value="TreeGrafter"/>
</dbReference>
<dbReference type="CDD" id="cd11567">
    <property type="entry name" value="YciH_like"/>
    <property type="match status" value="1"/>
</dbReference>
<dbReference type="FunFam" id="3.30.780.10:FF:000006">
    <property type="entry name" value="Protein translation factor SUI1 homolog"/>
    <property type="match status" value="1"/>
</dbReference>
<dbReference type="Gene3D" id="3.30.780.10">
    <property type="entry name" value="SUI1-like domain"/>
    <property type="match status" value="1"/>
</dbReference>
<dbReference type="HAMAP" id="MF_00604">
    <property type="entry name" value="SUI1"/>
    <property type="match status" value="1"/>
</dbReference>
<dbReference type="InterPro" id="IPR050318">
    <property type="entry name" value="DENR/SUI1_TIF"/>
</dbReference>
<dbReference type="InterPro" id="IPR001950">
    <property type="entry name" value="SUI1"/>
</dbReference>
<dbReference type="InterPro" id="IPR022851">
    <property type="entry name" value="SUI1_arc"/>
</dbReference>
<dbReference type="InterPro" id="IPR005872">
    <property type="entry name" value="SUI1_arc_bac"/>
</dbReference>
<dbReference type="InterPro" id="IPR036877">
    <property type="entry name" value="SUI1_dom_sf"/>
</dbReference>
<dbReference type="NCBIfam" id="NF002096">
    <property type="entry name" value="PRK00939.1"/>
    <property type="match status" value="1"/>
</dbReference>
<dbReference type="NCBIfam" id="TIGR01158">
    <property type="entry name" value="SUI1_rel"/>
    <property type="match status" value="1"/>
</dbReference>
<dbReference type="PANTHER" id="PTHR12789:SF0">
    <property type="entry name" value="DENSITY-REGULATED PROTEIN"/>
    <property type="match status" value="1"/>
</dbReference>
<dbReference type="PANTHER" id="PTHR12789">
    <property type="entry name" value="DENSITY-REGULATED PROTEIN HOMOLOG"/>
    <property type="match status" value="1"/>
</dbReference>
<dbReference type="Pfam" id="PF01253">
    <property type="entry name" value="SUI1"/>
    <property type="match status" value="1"/>
</dbReference>
<dbReference type="PIRSF" id="PIRSF037511">
    <property type="entry name" value="Transl_init_SUI1_pro"/>
    <property type="match status" value="1"/>
</dbReference>
<dbReference type="SUPFAM" id="SSF55159">
    <property type="entry name" value="eIF1-like"/>
    <property type="match status" value="1"/>
</dbReference>
<dbReference type="PROSITE" id="PS50296">
    <property type="entry name" value="SUI1"/>
    <property type="match status" value="1"/>
</dbReference>
<sequence>MVPRIVNPLDEMLFKEVLKEQQRIKVYIERARYGKVKTIIEGIDEKEFDLEEIAKKLKAKLACGGTAKNGRIELQGDHRDRIKKLLAELGFSEELIEVE</sequence>
<evidence type="ECO:0000255" key="1">
    <source>
        <dbReference type="HAMAP-Rule" id="MF_00604"/>
    </source>
</evidence>
<evidence type="ECO:0007829" key="2">
    <source>
        <dbReference type="PDB" id="5ZCY"/>
    </source>
</evidence>
<proteinExistence type="evidence at protein level"/>
<organism>
    <name type="scientific">Pyrococcus horikoshii (strain ATCC 700860 / DSM 12428 / JCM 9974 / NBRC 100139 / OT-3)</name>
    <dbReference type="NCBI Taxonomy" id="70601"/>
    <lineage>
        <taxon>Archaea</taxon>
        <taxon>Methanobacteriati</taxon>
        <taxon>Methanobacteriota</taxon>
        <taxon>Thermococci</taxon>
        <taxon>Thermococcales</taxon>
        <taxon>Thermococcaceae</taxon>
        <taxon>Pyrococcus</taxon>
    </lineage>
</organism>
<comment type="similarity">
    <text evidence="1">Belongs to the SUI1 family.</text>
</comment>
<gene>
    <name type="ordered locus">PH1771.1</name>
</gene>
<keyword id="KW-0002">3D-structure</keyword>
<keyword id="KW-0648">Protein biosynthesis</keyword>
<keyword id="KW-0810">Translation regulation</keyword>